<name>PYRF_LACLA</name>
<keyword id="KW-0210">Decarboxylase</keyword>
<keyword id="KW-0456">Lyase</keyword>
<keyword id="KW-0665">Pyrimidine biosynthesis</keyword>
<keyword id="KW-1185">Reference proteome</keyword>
<feature type="chain" id="PRO_0000134549" description="Orotidine 5'-phosphate decarboxylase">
    <location>
        <begin position="1"/>
        <end position="237"/>
    </location>
</feature>
<feature type="active site" description="Proton donor" evidence="1">
    <location>
        <position position="63"/>
    </location>
</feature>
<feature type="binding site" evidence="1">
    <location>
        <position position="11"/>
    </location>
    <ligand>
        <name>substrate</name>
    </ligand>
</feature>
<feature type="binding site" evidence="1">
    <location>
        <position position="34"/>
    </location>
    <ligand>
        <name>substrate</name>
    </ligand>
</feature>
<feature type="binding site" evidence="1">
    <location>
        <begin position="61"/>
        <end position="70"/>
    </location>
    <ligand>
        <name>substrate</name>
    </ligand>
</feature>
<feature type="binding site" evidence="1">
    <location>
        <position position="124"/>
    </location>
    <ligand>
        <name>substrate</name>
    </ligand>
</feature>
<feature type="binding site" evidence="1">
    <location>
        <position position="186"/>
    </location>
    <ligand>
        <name>substrate</name>
    </ligand>
</feature>
<feature type="binding site" evidence="1">
    <location>
        <position position="195"/>
    </location>
    <ligand>
        <name>substrate</name>
    </ligand>
</feature>
<feature type="binding site" evidence="1">
    <location>
        <position position="215"/>
    </location>
    <ligand>
        <name>substrate</name>
    </ligand>
</feature>
<feature type="binding site" evidence="1">
    <location>
        <position position="216"/>
    </location>
    <ligand>
        <name>substrate</name>
    </ligand>
</feature>
<feature type="sequence conflict" description="In Ref. 1; AAF63958." evidence="2" ref="1">
    <original>H</original>
    <variation>R</variation>
    <location>
        <position position="76"/>
    </location>
</feature>
<feature type="sequence conflict" description="In Ref. 1; AAF63958." evidence="2" ref="1">
    <original>V</original>
    <variation>L</variation>
    <location>
        <position position="83"/>
    </location>
</feature>
<feature type="sequence conflict" description="In Ref. 1; AAF63958." evidence="2" ref="1">
    <original>E</original>
    <variation>K</variation>
    <location>
        <position position="129"/>
    </location>
</feature>
<feature type="sequence conflict" description="In Ref. 1; AAF63958." evidence="2" ref="1">
    <original>R</original>
    <variation>Q</variation>
    <location>
        <position position="237"/>
    </location>
</feature>
<proteinExistence type="inferred from homology"/>
<evidence type="ECO:0000255" key="1">
    <source>
        <dbReference type="HAMAP-Rule" id="MF_01200"/>
    </source>
</evidence>
<evidence type="ECO:0000305" key="2"/>
<dbReference type="EC" id="4.1.1.23" evidence="1"/>
<dbReference type="EMBL" id="AF174425">
    <property type="protein sequence ID" value="AAF63958.1"/>
    <property type="molecule type" value="Genomic_DNA"/>
</dbReference>
<dbReference type="EMBL" id="AE005176">
    <property type="protein sequence ID" value="AAK05443.1"/>
    <property type="molecule type" value="Genomic_DNA"/>
</dbReference>
<dbReference type="PIR" id="A86793">
    <property type="entry name" value="A86793"/>
</dbReference>
<dbReference type="RefSeq" id="NP_267501.1">
    <property type="nucleotide sequence ID" value="NC_002662.1"/>
</dbReference>
<dbReference type="RefSeq" id="WP_003131093.1">
    <property type="nucleotide sequence ID" value="NC_002662.1"/>
</dbReference>
<dbReference type="SMR" id="Q9CFW9"/>
<dbReference type="PaxDb" id="272623-L181692"/>
<dbReference type="EnsemblBacteria" id="AAK05443">
    <property type="protein sequence ID" value="AAK05443"/>
    <property type="gene ID" value="L181692"/>
</dbReference>
<dbReference type="KEGG" id="lla:L181692"/>
<dbReference type="PATRIC" id="fig|272623.7.peg.1451"/>
<dbReference type="eggNOG" id="COG0284">
    <property type="taxonomic scope" value="Bacteria"/>
</dbReference>
<dbReference type="HOGENOM" id="CLU_067069_1_1_9"/>
<dbReference type="OrthoDB" id="9806203at2"/>
<dbReference type="UniPathway" id="UPA00070">
    <property type="reaction ID" value="UER00120"/>
</dbReference>
<dbReference type="Proteomes" id="UP000002196">
    <property type="component" value="Chromosome"/>
</dbReference>
<dbReference type="GO" id="GO:0005829">
    <property type="term" value="C:cytosol"/>
    <property type="evidence" value="ECO:0007669"/>
    <property type="project" value="TreeGrafter"/>
</dbReference>
<dbReference type="GO" id="GO:0004590">
    <property type="term" value="F:orotidine-5'-phosphate decarboxylase activity"/>
    <property type="evidence" value="ECO:0007669"/>
    <property type="project" value="UniProtKB-UniRule"/>
</dbReference>
<dbReference type="GO" id="GO:0006207">
    <property type="term" value="P:'de novo' pyrimidine nucleobase biosynthetic process"/>
    <property type="evidence" value="ECO:0007669"/>
    <property type="project" value="InterPro"/>
</dbReference>
<dbReference type="GO" id="GO:0044205">
    <property type="term" value="P:'de novo' UMP biosynthetic process"/>
    <property type="evidence" value="ECO:0007669"/>
    <property type="project" value="UniProtKB-UniRule"/>
</dbReference>
<dbReference type="CDD" id="cd04725">
    <property type="entry name" value="OMP_decarboxylase_like"/>
    <property type="match status" value="1"/>
</dbReference>
<dbReference type="FunFam" id="3.20.20.70:FF:000015">
    <property type="entry name" value="Orotidine 5'-phosphate decarboxylase"/>
    <property type="match status" value="1"/>
</dbReference>
<dbReference type="Gene3D" id="3.20.20.70">
    <property type="entry name" value="Aldolase class I"/>
    <property type="match status" value="1"/>
</dbReference>
<dbReference type="HAMAP" id="MF_01200_B">
    <property type="entry name" value="OMPdecase_type1_B"/>
    <property type="match status" value="1"/>
</dbReference>
<dbReference type="InterPro" id="IPR013785">
    <property type="entry name" value="Aldolase_TIM"/>
</dbReference>
<dbReference type="InterPro" id="IPR014732">
    <property type="entry name" value="OMPdecase"/>
</dbReference>
<dbReference type="InterPro" id="IPR018089">
    <property type="entry name" value="OMPdecase_AS"/>
</dbReference>
<dbReference type="InterPro" id="IPR047596">
    <property type="entry name" value="OMPdecase_bac"/>
</dbReference>
<dbReference type="InterPro" id="IPR001754">
    <property type="entry name" value="OMPdeCOase_dom"/>
</dbReference>
<dbReference type="InterPro" id="IPR011060">
    <property type="entry name" value="RibuloseP-bd_barrel"/>
</dbReference>
<dbReference type="NCBIfam" id="NF001273">
    <property type="entry name" value="PRK00230.1"/>
    <property type="match status" value="1"/>
</dbReference>
<dbReference type="NCBIfam" id="TIGR01740">
    <property type="entry name" value="pyrF"/>
    <property type="match status" value="1"/>
</dbReference>
<dbReference type="PANTHER" id="PTHR32119">
    <property type="entry name" value="OROTIDINE 5'-PHOSPHATE DECARBOXYLASE"/>
    <property type="match status" value="1"/>
</dbReference>
<dbReference type="PANTHER" id="PTHR32119:SF2">
    <property type="entry name" value="OROTIDINE 5'-PHOSPHATE DECARBOXYLASE"/>
    <property type="match status" value="1"/>
</dbReference>
<dbReference type="Pfam" id="PF00215">
    <property type="entry name" value="OMPdecase"/>
    <property type="match status" value="1"/>
</dbReference>
<dbReference type="SMART" id="SM00934">
    <property type="entry name" value="OMPdecase"/>
    <property type="match status" value="1"/>
</dbReference>
<dbReference type="SUPFAM" id="SSF51366">
    <property type="entry name" value="Ribulose-phoshate binding barrel"/>
    <property type="match status" value="1"/>
</dbReference>
<dbReference type="PROSITE" id="PS00156">
    <property type="entry name" value="OMPDECASE"/>
    <property type="match status" value="1"/>
</dbReference>
<reference key="1">
    <citation type="journal article" date="2000" name="Appl. Environ. Microbiol.">
        <title>A food-grade cloning system for industrial strains of Lactococcus lactis.</title>
        <authorList>
            <person name="Soerensen K.I."/>
            <person name="Larsen R."/>
            <person name="Kibenich A."/>
            <person name="Junge M.P."/>
            <person name="Johansen E."/>
        </authorList>
    </citation>
    <scope>NUCLEOTIDE SEQUENCE [GENOMIC DNA]</scope>
    <source>
        <strain>CHCC377</strain>
    </source>
</reference>
<reference key="2">
    <citation type="journal article" date="2001" name="Genome Res.">
        <title>The complete genome sequence of the lactic acid bacterium Lactococcus lactis ssp. lactis IL1403.</title>
        <authorList>
            <person name="Bolotin A."/>
            <person name="Wincker P."/>
            <person name="Mauger S."/>
            <person name="Jaillon O."/>
            <person name="Malarme K."/>
            <person name="Weissenbach J."/>
            <person name="Ehrlich S.D."/>
            <person name="Sorokin A."/>
        </authorList>
    </citation>
    <scope>NUCLEOTIDE SEQUENCE [LARGE SCALE GENOMIC DNA]</scope>
    <source>
        <strain>IL1403</strain>
    </source>
</reference>
<comment type="function">
    <text evidence="1">Catalyzes the decarboxylation of orotidine 5'-monophosphate (OMP) to uridine 5'-monophosphate (UMP).</text>
</comment>
<comment type="catalytic activity">
    <reaction evidence="1">
        <text>orotidine 5'-phosphate + H(+) = UMP + CO2</text>
        <dbReference type="Rhea" id="RHEA:11596"/>
        <dbReference type="ChEBI" id="CHEBI:15378"/>
        <dbReference type="ChEBI" id="CHEBI:16526"/>
        <dbReference type="ChEBI" id="CHEBI:57538"/>
        <dbReference type="ChEBI" id="CHEBI:57865"/>
        <dbReference type="EC" id="4.1.1.23"/>
    </reaction>
</comment>
<comment type="pathway">
    <text evidence="1">Pyrimidine metabolism; UMP biosynthesis via de novo pathway; UMP from orotate: step 2/2.</text>
</comment>
<comment type="subunit">
    <text evidence="1">Homodimer.</text>
</comment>
<comment type="similarity">
    <text evidence="1">Belongs to the OMP decarboxylase family. Type 1 subfamily.</text>
</comment>
<accession>Q9CFW9</accession>
<accession>Q9L9C5</accession>
<sequence>MQENRPVIALDFPEFSDVKDFLEKFDPSEQLYIKLGMELFYTAGPQVVYYVKSLGHSVFLDLKLHDIPNTVESSMHVLARLGVDMVNVHAAGGVEMMVAAKRGLEAGTPVGRQRPKLIAVTQLTSTSEEIMQNDQKIMTSLEESVINYAQKTAQAGLDGVVCSAHEVEKIKAATSKEFICLTPGIRPEGASKGDQKRVMTPKEARTIGSDYIVVGRPITQAKDPVASYHAIKAEWNR</sequence>
<protein>
    <recommendedName>
        <fullName evidence="1">Orotidine 5'-phosphate decarboxylase</fullName>
        <ecNumber evidence="1">4.1.1.23</ecNumber>
    </recommendedName>
    <alternativeName>
        <fullName evidence="1">OMP decarboxylase</fullName>
        <shortName evidence="1">OMPDCase</shortName>
        <shortName evidence="1">OMPdecase</shortName>
    </alternativeName>
</protein>
<gene>
    <name evidence="1" type="primary">pyrF</name>
    <name type="ordered locus">LL1345</name>
    <name type="ORF">L181692</name>
</gene>
<organism>
    <name type="scientific">Lactococcus lactis subsp. lactis (strain IL1403)</name>
    <name type="common">Streptococcus lactis</name>
    <dbReference type="NCBI Taxonomy" id="272623"/>
    <lineage>
        <taxon>Bacteria</taxon>
        <taxon>Bacillati</taxon>
        <taxon>Bacillota</taxon>
        <taxon>Bacilli</taxon>
        <taxon>Lactobacillales</taxon>
        <taxon>Streptococcaceae</taxon>
        <taxon>Lactococcus</taxon>
    </lineage>
</organism>